<name>RS10_ECOBW</name>
<gene>
    <name evidence="1" type="primary">rpsJ</name>
    <name type="ordered locus">BWG_3012</name>
</gene>
<keyword id="KW-0687">Ribonucleoprotein</keyword>
<keyword id="KW-0689">Ribosomal protein</keyword>
<comment type="function">
    <text evidence="1">Involved in the binding of tRNA to the ribosomes.</text>
</comment>
<comment type="subunit">
    <text evidence="1">Part of the 30S ribosomal subunit.</text>
</comment>
<comment type="similarity">
    <text evidence="1">Belongs to the universal ribosomal protein uS10 family.</text>
</comment>
<reference key="1">
    <citation type="journal article" date="2009" name="J. Bacteriol.">
        <title>Genomic sequencing reveals regulatory mutations and recombinational events in the widely used MC4100 lineage of Escherichia coli K-12.</title>
        <authorList>
            <person name="Ferenci T."/>
            <person name="Zhou Z."/>
            <person name="Betteridge T."/>
            <person name="Ren Y."/>
            <person name="Liu Y."/>
            <person name="Feng L."/>
            <person name="Reeves P.R."/>
            <person name="Wang L."/>
        </authorList>
    </citation>
    <scope>NUCLEOTIDE SEQUENCE [LARGE SCALE GENOMIC DNA]</scope>
    <source>
        <strain>K12 / MC4100 / BW2952</strain>
    </source>
</reference>
<feature type="chain" id="PRO_1000206582" description="Small ribosomal subunit protein uS10">
    <location>
        <begin position="1"/>
        <end position="103"/>
    </location>
</feature>
<proteinExistence type="inferred from homology"/>
<accession>C4ZUH6</accession>
<sequence>MQNQRIRIRLKAFDHRLIDQATAEIVETAKRTGAQVRGPIPLPTRKERFTVLISPHVNKDARDQYEIRTHLRLVDIVEPTEKTVDALMRLDLAAGVDVQISLG</sequence>
<protein>
    <recommendedName>
        <fullName evidence="1">Small ribosomal subunit protein uS10</fullName>
    </recommendedName>
    <alternativeName>
        <fullName evidence="2">30S ribosomal protein S10</fullName>
    </alternativeName>
</protein>
<dbReference type="EMBL" id="CP001396">
    <property type="protein sequence ID" value="ACR61782.1"/>
    <property type="molecule type" value="Genomic_DNA"/>
</dbReference>
<dbReference type="RefSeq" id="WP_001181004.1">
    <property type="nucleotide sequence ID" value="NC_012759.1"/>
</dbReference>
<dbReference type="SMR" id="C4ZUH6"/>
<dbReference type="GeneID" id="93778666"/>
<dbReference type="KEGG" id="ebw:BWG_3012"/>
<dbReference type="HOGENOM" id="CLU_122625_1_3_6"/>
<dbReference type="GO" id="GO:1990904">
    <property type="term" value="C:ribonucleoprotein complex"/>
    <property type="evidence" value="ECO:0007669"/>
    <property type="project" value="UniProtKB-KW"/>
</dbReference>
<dbReference type="GO" id="GO:0005840">
    <property type="term" value="C:ribosome"/>
    <property type="evidence" value="ECO:0007669"/>
    <property type="project" value="UniProtKB-KW"/>
</dbReference>
<dbReference type="GO" id="GO:0003735">
    <property type="term" value="F:structural constituent of ribosome"/>
    <property type="evidence" value="ECO:0007669"/>
    <property type="project" value="InterPro"/>
</dbReference>
<dbReference type="GO" id="GO:0000049">
    <property type="term" value="F:tRNA binding"/>
    <property type="evidence" value="ECO:0007669"/>
    <property type="project" value="UniProtKB-UniRule"/>
</dbReference>
<dbReference type="GO" id="GO:0006412">
    <property type="term" value="P:translation"/>
    <property type="evidence" value="ECO:0007669"/>
    <property type="project" value="UniProtKB-UniRule"/>
</dbReference>
<dbReference type="FunFam" id="3.30.70.600:FF:000001">
    <property type="entry name" value="30S ribosomal protein S10"/>
    <property type="match status" value="1"/>
</dbReference>
<dbReference type="Gene3D" id="3.30.70.600">
    <property type="entry name" value="Ribosomal protein S10 domain"/>
    <property type="match status" value="1"/>
</dbReference>
<dbReference type="HAMAP" id="MF_00508">
    <property type="entry name" value="Ribosomal_uS10"/>
    <property type="match status" value="1"/>
</dbReference>
<dbReference type="InterPro" id="IPR001848">
    <property type="entry name" value="Ribosomal_uS10"/>
</dbReference>
<dbReference type="InterPro" id="IPR018268">
    <property type="entry name" value="Ribosomal_uS10_CS"/>
</dbReference>
<dbReference type="InterPro" id="IPR027486">
    <property type="entry name" value="Ribosomal_uS10_dom"/>
</dbReference>
<dbReference type="InterPro" id="IPR036838">
    <property type="entry name" value="Ribosomal_uS10_dom_sf"/>
</dbReference>
<dbReference type="NCBIfam" id="NF001861">
    <property type="entry name" value="PRK00596.1"/>
    <property type="match status" value="1"/>
</dbReference>
<dbReference type="NCBIfam" id="TIGR01049">
    <property type="entry name" value="rpsJ_bact"/>
    <property type="match status" value="1"/>
</dbReference>
<dbReference type="PANTHER" id="PTHR11700">
    <property type="entry name" value="30S RIBOSOMAL PROTEIN S10 FAMILY MEMBER"/>
    <property type="match status" value="1"/>
</dbReference>
<dbReference type="Pfam" id="PF00338">
    <property type="entry name" value="Ribosomal_S10"/>
    <property type="match status" value="1"/>
</dbReference>
<dbReference type="PRINTS" id="PR00971">
    <property type="entry name" value="RIBOSOMALS10"/>
</dbReference>
<dbReference type="SMART" id="SM01403">
    <property type="entry name" value="Ribosomal_S10"/>
    <property type="match status" value="1"/>
</dbReference>
<dbReference type="SUPFAM" id="SSF54999">
    <property type="entry name" value="Ribosomal protein S10"/>
    <property type="match status" value="1"/>
</dbReference>
<dbReference type="PROSITE" id="PS00361">
    <property type="entry name" value="RIBOSOMAL_S10"/>
    <property type="match status" value="1"/>
</dbReference>
<evidence type="ECO:0000255" key="1">
    <source>
        <dbReference type="HAMAP-Rule" id="MF_00508"/>
    </source>
</evidence>
<evidence type="ECO:0000305" key="2"/>
<organism>
    <name type="scientific">Escherichia coli (strain K12 / MC4100 / BW2952)</name>
    <dbReference type="NCBI Taxonomy" id="595496"/>
    <lineage>
        <taxon>Bacteria</taxon>
        <taxon>Pseudomonadati</taxon>
        <taxon>Pseudomonadota</taxon>
        <taxon>Gammaproteobacteria</taxon>
        <taxon>Enterobacterales</taxon>
        <taxon>Enterobacteriaceae</taxon>
        <taxon>Escherichia</taxon>
    </lineage>
</organism>